<comment type="function">
    <text evidence="1">NAD-dependent protein deacylase. Catalyzes the NAD-dependent hydrolysis of acyl groups from lysine residues.</text>
</comment>
<comment type="catalytic activity">
    <reaction evidence="1">
        <text>N(6)-acetyl-L-lysyl-[protein] + NAD(+) + H2O = 2''-O-acetyl-ADP-D-ribose + nicotinamide + L-lysyl-[protein]</text>
        <dbReference type="Rhea" id="RHEA:43636"/>
        <dbReference type="Rhea" id="RHEA-COMP:9752"/>
        <dbReference type="Rhea" id="RHEA-COMP:10731"/>
        <dbReference type="ChEBI" id="CHEBI:15377"/>
        <dbReference type="ChEBI" id="CHEBI:17154"/>
        <dbReference type="ChEBI" id="CHEBI:29969"/>
        <dbReference type="ChEBI" id="CHEBI:57540"/>
        <dbReference type="ChEBI" id="CHEBI:61930"/>
        <dbReference type="ChEBI" id="CHEBI:83767"/>
        <dbReference type="EC" id="2.3.1.286"/>
    </reaction>
</comment>
<comment type="cofactor">
    <cofactor evidence="1">
        <name>Zn(2+)</name>
        <dbReference type="ChEBI" id="CHEBI:29105"/>
    </cofactor>
    <text evidence="1">Binds 1 zinc ion per subunit.</text>
</comment>
<comment type="subcellular location">
    <subcellularLocation>
        <location evidence="1">Mitochondrion matrix</location>
    </subcellularLocation>
</comment>
<comment type="similarity">
    <text evidence="1">Belongs to the sirtuin family. Class II subfamily.</text>
</comment>
<sequence length="305" mass="34106">MSAQVMHNRVMGTVKDSASKLVDFLMRHHGQTVLLTGAGVSTDSGIPDYRGPQGIYSRNKDFKPIQYQQFVGPHEFRQRYWARSFLGWPKVSQAQPNASHHAIAALESRSHIAGCITQNVDGLHRRAVVIENPNLLEIHGTLHWVNCISCGYKLQRSAMQEQLQKINPIVYEWQRLNPEKSNADVASSLNPDGDVEIKWDYNHFKYPHCPECNGLLKPNVVFFGENMPMTVRDTSFKMIDDAKALLVVGSSLQVYSALRLVKRAASTGKPIAILNLGFTRGDELAQIRINLGSSAVLEELASTIR</sequence>
<feature type="transit peptide" description="Mitochondrion" evidence="1">
    <location>
        <begin position="1"/>
        <end position="10"/>
    </location>
</feature>
<feature type="chain" id="PRO_0000417351" description="NAD-dependent protein deacylase SIR4">
    <location>
        <begin position="11"/>
        <end position="305"/>
    </location>
</feature>
<feature type="domain" description="Deacetylase sirtuin-type" evidence="2">
    <location>
        <begin position="11"/>
        <end position="305"/>
    </location>
</feature>
<feature type="active site" description="Proton acceptor" evidence="2">
    <location>
        <position position="139"/>
    </location>
</feature>
<feature type="binding site" evidence="1">
    <location>
        <begin position="37"/>
        <end position="57"/>
    </location>
    <ligand>
        <name>NAD(+)</name>
        <dbReference type="ChEBI" id="CHEBI:57540"/>
    </ligand>
</feature>
<feature type="binding site" evidence="1">
    <location>
        <begin position="118"/>
        <end position="121"/>
    </location>
    <ligand>
        <name>NAD(+)</name>
        <dbReference type="ChEBI" id="CHEBI:57540"/>
    </ligand>
</feature>
<feature type="binding site" evidence="1">
    <location>
        <position position="147"/>
    </location>
    <ligand>
        <name>Zn(2+)</name>
        <dbReference type="ChEBI" id="CHEBI:29105"/>
    </ligand>
</feature>
<feature type="binding site" evidence="1">
    <location>
        <position position="150"/>
    </location>
    <ligand>
        <name>Zn(2+)</name>
        <dbReference type="ChEBI" id="CHEBI:29105"/>
    </ligand>
</feature>
<feature type="binding site" evidence="1">
    <location>
        <position position="209"/>
    </location>
    <ligand>
        <name>Zn(2+)</name>
        <dbReference type="ChEBI" id="CHEBI:29105"/>
    </ligand>
</feature>
<feature type="binding site" evidence="1">
    <location>
        <position position="212"/>
    </location>
    <ligand>
        <name>Zn(2+)</name>
        <dbReference type="ChEBI" id="CHEBI:29105"/>
    </ligand>
</feature>
<feature type="binding site" evidence="1">
    <location>
        <begin position="249"/>
        <end position="251"/>
    </location>
    <ligand>
        <name>NAD(+)</name>
        <dbReference type="ChEBI" id="CHEBI:57540"/>
    </ligand>
</feature>
<feature type="binding site" evidence="1">
    <location>
        <begin position="275"/>
        <end position="277"/>
    </location>
    <ligand>
        <name>NAD(+)</name>
        <dbReference type="ChEBI" id="CHEBI:57540"/>
    </ligand>
</feature>
<feature type="binding site" evidence="1">
    <location>
        <position position="293"/>
    </location>
    <ligand>
        <name>NAD(+)</name>
        <dbReference type="ChEBI" id="CHEBI:57540"/>
    </ligand>
</feature>
<proteinExistence type="inferred from homology"/>
<gene>
    <name type="ORF">BATDEDRAFT_20316</name>
</gene>
<name>SIR4_BATDJ</name>
<organism>
    <name type="scientific">Batrachochytrium dendrobatidis (strain JAM81 / FGSC 10211)</name>
    <name type="common">Frog chytrid fungus</name>
    <dbReference type="NCBI Taxonomy" id="684364"/>
    <lineage>
        <taxon>Eukaryota</taxon>
        <taxon>Fungi</taxon>
        <taxon>Fungi incertae sedis</taxon>
        <taxon>Chytridiomycota</taxon>
        <taxon>Chytridiomycota incertae sedis</taxon>
        <taxon>Chytridiomycetes</taxon>
        <taxon>Rhizophydiales</taxon>
        <taxon>Rhizophydiales incertae sedis</taxon>
        <taxon>Batrachochytrium</taxon>
    </lineage>
</organism>
<keyword id="KW-0479">Metal-binding</keyword>
<keyword id="KW-0496">Mitochondrion</keyword>
<keyword id="KW-0520">NAD</keyword>
<keyword id="KW-1185">Reference proteome</keyword>
<keyword id="KW-0808">Transferase</keyword>
<keyword id="KW-0809">Transit peptide</keyword>
<keyword id="KW-0862">Zinc</keyword>
<protein>
    <recommendedName>
        <fullName evidence="1">NAD-dependent protein deacylase SIR4</fullName>
        <ecNumber evidence="1 2">2.3.1.286</ecNumber>
    </recommendedName>
    <alternativeName>
        <fullName evidence="1">Regulatory protein SIR2 homolog 4</fullName>
    </alternativeName>
</protein>
<accession>F4P804</accession>
<dbReference type="EC" id="2.3.1.286" evidence="1 2"/>
<dbReference type="EMBL" id="GL882888">
    <property type="protein sequence ID" value="EGF78665.1"/>
    <property type="molecule type" value="Genomic_DNA"/>
</dbReference>
<dbReference type="RefSeq" id="XP_006680653.1">
    <property type="nucleotide sequence ID" value="XM_006680590.1"/>
</dbReference>
<dbReference type="SMR" id="F4P804"/>
<dbReference type="STRING" id="684364.F4P804"/>
<dbReference type="GeneID" id="18237484"/>
<dbReference type="HOGENOM" id="CLU_023643_3_2_1"/>
<dbReference type="InParanoid" id="F4P804"/>
<dbReference type="OMA" id="RRHYWAR"/>
<dbReference type="OrthoDB" id="424302at2759"/>
<dbReference type="Proteomes" id="UP000007241">
    <property type="component" value="Unassembled WGS sequence"/>
</dbReference>
<dbReference type="GO" id="GO:0005759">
    <property type="term" value="C:mitochondrial matrix"/>
    <property type="evidence" value="ECO:0007669"/>
    <property type="project" value="UniProtKB-SubCell"/>
</dbReference>
<dbReference type="GO" id="GO:0017136">
    <property type="term" value="F:histone deacetylase activity, NAD-dependent"/>
    <property type="evidence" value="ECO:0000318"/>
    <property type="project" value="GO_Central"/>
</dbReference>
<dbReference type="GO" id="GO:0070403">
    <property type="term" value="F:NAD+ binding"/>
    <property type="evidence" value="ECO:0000318"/>
    <property type="project" value="GO_Central"/>
</dbReference>
<dbReference type="GO" id="GO:0008270">
    <property type="term" value="F:zinc ion binding"/>
    <property type="evidence" value="ECO:0007669"/>
    <property type="project" value="UniProtKB-UniRule"/>
</dbReference>
<dbReference type="Gene3D" id="3.30.1600.10">
    <property type="entry name" value="SIR2/SIRT2 'Small Domain"/>
    <property type="match status" value="1"/>
</dbReference>
<dbReference type="Gene3D" id="3.40.50.1220">
    <property type="entry name" value="TPP-binding domain"/>
    <property type="match status" value="1"/>
</dbReference>
<dbReference type="HAMAP" id="MF_01967">
    <property type="entry name" value="Sirtuin_ClassII"/>
    <property type="match status" value="1"/>
</dbReference>
<dbReference type="InterPro" id="IPR029035">
    <property type="entry name" value="DHS-like_NAD/FAD-binding_dom"/>
</dbReference>
<dbReference type="InterPro" id="IPR050134">
    <property type="entry name" value="NAD-dep_sirtuin_deacylases"/>
</dbReference>
<dbReference type="InterPro" id="IPR003000">
    <property type="entry name" value="Sirtuin"/>
</dbReference>
<dbReference type="InterPro" id="IPR026591">
    <property type="entry name" value="Sirtuin_cat_small_dom_sf"/>
</dbReference>
<dbReference type="InterPro" id="IPR026587">
    <property type="entry name" value="Sirtuin_class_II"/>
</dbReference>
<dbReference type="InterPro" id="IPR026590">
    <property type="entry name" value="Ssirtuin_cat_dom"/>
</dbReference>
<dbReference type="NCBIfam" id="NF003738">
    <property type="entry name" value="PRK05333.1"/>
    <property type="match status" value="1"/>
</dbReference>
<dbReference type="PANTHER" id="PTHR11085">
    <property type="entry name" value="NAD-DEPENDENT PROTEIN DEACYLASE SIRTUIN-5, MITOCHONDRIAL-RELATED"/>
    <property type="match status" value="1"/>
</dbReference>
<dbReference type="PANTHER" id="PTHR11085:SF10">
    <property type="entry name" value="NAD-DEPENDENT PROTEIN DEACYLASE SIRTUIN-5, MITOCHONDRIAL-RELATED"/>
    <property type="match status" value="1"/>
</dbReference>
<dbReference type="Pfam" id="PF02146">
    <property type="entry name" value="SIR2"/>
    <property type="match status" value="1"/>
</dbReference>
<dbReference type="SUPFAM" id="SSF52467">
    <property type="entry name" value="DHS-like NAD/FAD-binding domain"/>
    <property type="match status" value="1"/>
</dbReference>
<dbReference type="PROSITE" id="PS50305">
    <property type="entry name" value="SIRTUIN"/>
    <property type="match status" value="1"/>
</dbReference>
<reference key="1">
    <citation type="submission" date="2009-12" db="EMBL/GenBank/DDBJ databases">
        <title>The draft genome of Batrachochytrium dendrobatidis.</title>
        <authorList>
            <consortium name="US DOE Joint Genome Institute (JGI-PGF)"/>
            <person name="Kuo A."/>
            <person name="Salamov A."/>
            <person name="Schmutz J."/>
            <person name="Lucas S."/>
            <person name="Pitluck S."/>
            <person name="Rosenblum E."/>
            <person name="Stajich J."/>
            <person name="Eisen M."/>
            <person name="Grigoriev I.V."/>
        </authorList>
    </citation>
    <scope>NUCLEOTIDE SEQUENCE [LARGE SCALE GENOMIC DNA]</scope>
    <source>
        <strain>JAM81 / FGSC 10211</strain>
    </source>
</reference>
<evidence type="ECO:0000255" key="1">
    <source>
        <dbReference type="HAMAP-Rule" id="MF_03161"/>
    </source>
</evidence>
<evidence type="ECO:0000255" key="2">
    <source>
        <dbReference type="PROSITE-ProRule" id="PRU00236"/>
    </source>
</evidence>